<proteinExistence type="inferred from homology"/>
<dbReference type="EMBL" id="AJ632303">
    <property type="protein sequence ID" value="CAG15152.1"/>
    <property type="molecule type" value="Genomic_DNA"/>
</dbReference>
<dbReference type="RefSeq" id="NP_001116581.1">
    <property type="nucleotide sequence ID" value="NM_001123109.1"/>
</dbReference>
<dbReference type="SMR" id="Q684M3"/>
<dbReference type="FunCoup" id="Q684M3">
    <property type="interactions" value="184"/>
</dbReference>
<dbReference type="STRING" id="9823.ENSSSCP00000065759"/>
<dbReference type="GlyCosmos" id="Q684M3">
    <property type="glycosylation" value="1 site, No reported glycans"/>
</dbReference>
<dbReference type="GlyGen" id="Q684M3">
    <property type="glycosylation" value="2 sites"/>
</dbReference>
<dbReference type="PaxDb" id="9823-ENSSSCP00000025031"/>
<dbReference type="Ensembl" id="ENSSSCT00015101812.1">
    <property type="protein sequence ID" value="ENSSSCP00015042195.1"/>
    <property type="gene ID" value="ENSSSCG00015075560.1"/>
</dbReference>
<dbReference type="Ensembl" id="ENSSSCT00030037813.1">
    <property type="protein sequence ID" value="ENSSSCP00030017343.1"/>
    <property type="gene ID" value="ENSSSCG00030027044.1"/>
</dbReference>
<dbReference type="Ensembl" id="ENSSSCT00045007194.1">
    <property type="protein sequence ID" value="ENSSSCP00045004936.1"/>
    <property type="gene ID" value="ENSSSCG00045004317.1"/>
</dbReference>
<dbReference type="Ensembl" id="ENSSSCT00050025619.1">
    <property type="protein sequence ID" value="ENSSSCP00050010642.1"/>
    <property type="gene ID" value="ENSSSCG00050018947.1"/>
</dbReference>
<dbReference type="Ensembl" id="ENSSSCT00060048513.1">
    <property type="protein sequence ID" value="ENSSSCP00060020770.1"/>
    <property type="gene ID" value="ENSSSCG00060035801.1"/>
</dbReference>
<dbReference type="Ensembl" id="ENSSSCT00105079065">
    <property type="protein sequence ID" value="ENSSSCP00105056106"/>
    <property type="gene ID" value="ENSSSCG00105041433"/>
</dbReference>
<dbReference type="Ensembl" id="ENSSSCT00130076628">
    <property type="protein sequence ID" value="ENSSSCP00130054963"/>
    <property type="gene ID" value="ENSSSCG00130039435"/>
</dbReference>
<dbReference type="GeneID" id="100141401"/>
<dbReference type="KEGG" id="ssc:100141401"/>
<dbReference type="CTD" id="53637"/>
<dbReference type="eggNOG" id="ENOG502QSWN">
    <property type="taxonomic scope" value="Eukaryota"/>
</dbReference>
<dbReference type="InParanoid" id="Q684M3"/>
<dbReference type="OrthoDB" id="9449747at2759"/>
<dbReference type="Reactome" id="R-SSC-418594">
    <property type="pathway name" value="G alpha (i) signalling events"/>
</dbReference>
<dbReference type="Reactome" id="R-SSC-419408">
    <property type="pathway name" value="Lysosphingolipid and LPA receptors"/>
</dbReference>
<dbReference type="Proteomes" id="UP000008227">
    <property type="component" value="Unplaced"/>
</dbReference>
<dbReference type="Proteomes" id="UP000314985">
    <property type="component" value="Unplaced"/>
</dbReference>
<dbReference type="Proteomes" id="UP000694570">
    <property type="component" value="Unplaced"/>
</dbReference>
<dbReference type="Proteomes" id="UP000694571">
    <property type="component" value="Unplaced"/>
</dbReference>
<dbReference type="Proteomes" id="UP000694720">
    <property type="component" value="Unplaced"/>
</dbReference>
<dbReference type="Proteomes" id="UP000694722">
    <property type="component" value="Unplaced"/>
</dbReference>
<dbReference type="Proteomes" id="UP000694723">
    <property type="component" value="Unplaced"/>
</dbReference>
<dbReference type="Proteomes" id="UP000694724">
    <property type="component" value="Unplaced"/>
</dbReference>
<dbReference type="Proteomes" id="UP000694725">
    <property type="component" value="Unplaced"/>
</dbReference>
<dbReference type="Proteomes" id="UP000694726">
    <property type="component" value="Unplaced"/>
</dbReference>
<dbReference type="Proteomes" id="UP000694727">
    <property type="component" value="Unplaced"/>
</dbReference>
<dbReference type="Proteomes" id="UP000694728">
    <property type="component" value="Unplaced"/>
</dbReference>
<dbReference type="GO" id="GO:0005737">
    <property type="term" value="C:cytoplasm"/>
    <property type="evidence" value="ECO:0000318"/>
    <property type="project" value="GO_Central"/>
</dbReference>
<dbReference type="GO" id="GO:0005886">
    <property type="term" value="C:plasma membrane"/>
    <property type="evidence" value="ECO:0000318"/>
    <property type="project" value="GO_Central"/>
</dbReference>
<dbReference type="GO" id="GO:0004930">
    <property type="term" value="F:G protein-coupled receptor activity"/>
    <property type="evidence" value="ECO:0000318"/>
    <property type="project" value="GO_Central"/>
</dbReference>
<dbReference type="GO" id="GO:0038036">
    <property type="term" value="F:sphingosine-1-phosphate receptor activity"/>
    <property type="evidence" value="ECO:0007669"/>
    <property type="project" value="InterPro"/>
</dbReference>
<dbReference type="GO" id="GO:0007189">
    <property type="term" value="P:adenylate cyclase-activating G protein-coupled receptor signaling pathway"/>
    <property type="evidence" value="ECO:0000318"/>
    <property type="project" value="GO_Central"/>
</dbReference>
<dbReference type="GO" id="GO:0019222">
    <property type="term" value="P:regulation of metabolic process"/>
    <property type="evidence" value="ECO:0000318"/>
    <property type="project" value="GO_Central"/>
</dbReference>
<dbReference type="FunFam" id="1.20.1070.10:FF:000251">
    <property type="entry name" value="Sphingosine 1-phosphate receptor 5"/>
    <property type="match status" value="1"/>
</dbReference>
<dbReference type="Gene3D" id="1.20.1070.10">
    <property type="entry name" value="Rhodopsin 7-helix transmembrane proteins"/>
    <property type="match status" value="1"/>
</dbReference>
<dbReference type="InterPro" id="IPR005386">
    <property type="entry name" value="EDG8_S1P_rcpt"/>
</dbReference>
<dbReference type="InterPro" id="IPR000276">
    <property type="entry name" value="GPCR_Rhodpsn"/>
</dbReference>
<dbReference type="InterPro" id="IPR017452">
    <property type="entry name" value="GPCR_Rhodpsn_7TM"/>
</dbReference>
<dbReference type="InterPro" id="IPR004061">
    <property type="entry name" value="S1P_rcpt"/>
</dbReference>
<dbReference type="PANTHER" id="PTHR22750">
    <property type="entry name" value="G-PROTEIN COUPLED RECEPTOR"/>
    <property type="match status" value="1"/>
</dbReference>
<dbReference type="Pfam" id="PF00001">
    <property type="entry name" value="7tm_1"/>
    <property type="match status" value="1"/>
</dbReference>
<dbReference type="PRINTS" id="PR01561">
    <property type="entry name" value="EDG8RECEPTOR"/>
</dbReference>
<dbReference type="PRINTS" id="PR00237">
    <property type="entry name" value="GPCRRHODOPSN"/>
</dbReference>
<dbReference type="PRINTS" id="PR01523">
    <property type="entry name" value="S1PRECEPTOR"/>
</dbReference>
<dbReference type="SUPFAM" id="SSF81321">
    <property type="entry name" value="Family A G protein-coupled receptor-like"/>
    <property type="match status" value="1"/>
</dbReference>
<dbReference type="PROSITE" id="PS50262">
    <property type="entry name" value="G_PROTEIN_RECEP_F1_2"/>
    <property type="match status" value="1"/>
</dbReference>
<keyword id="KW-1003">Cell membrane</keyword>
<keyword id="KW-0297">G-protein coupled receptor</keyword>
<keyword id="KW-0325">Glycoprotein</keyword>
<keyword id="KW-0449">Lipoprotein</keyword>
<keyword id="KW-0472">Membrane</keyword>
<keyword id="KW-0564">Palmitate</keyword>
<keyword id="KW-0597">Phosphoprotein</keyword>
<keyword id="KW-0675">Receptor</keyword>
<keyword id="KW-1185">Reference proteome</keyword>
<keyword id="KW-0807">Transducer</keyword>
<keyword id="KW-0812">Transmembrane</keyword>
<keyword id="KW-1133">Transmembrane helix</keyword>
<comment type="function">
    <text evidence="1">Receptor for the lysosphingolipid sphingosine 1-phosphate (S1P). S1P is a bioactive lysophospholipid that elicits diverse physiological effect on most types of cells and tissues. Is coupled to both the G(i/O)alpha and G(12) subclass of heteromeric G-proteins (By similarity).</text>
</comment>
<comment type="subcellular location">
    <subcellularLocation>
        <location>Cell membrane</location>
        <topology>Multi-pass membrane protein</topology>
    </subcellularLocation>
</comment>
<comment type="similarity">
    <text evidence="5">Belongs to the G-protein coupled receptor 1 family.</text>
</comment>
<gene>
    <name type="primary">S1PR5</name>
    <name type="synonym">EDG8</name>
</gene>
<feature type="chain" id="PRO_0000069438" description="Sphingosine 1-phosphate receptor 5">
    <location>
        <begin position="1"/>
        <end position="398"/>
    </location>
</feature>
<feature type="topological domain" description="Extracellular" evidence="1">
    <location>
        <begin position="1"/>
        <end position="40"/>
    </location>
</feature>
<feature type="transmembrane region" description="Helical; Name=1" evidence="1">
    <location>
        <begin position="41"/>
        <end position="61"/>
    </location>
</feature>
<feature type="topological domain" description="Cytoplasmic" evidence="1">
    <location>
        <begin position="62"/>
        <end position="70"/>
    </location>
</feature>
<feature type="transmembrane region" description="Helical; Name=2" evidence="1">
    <location>
        <begin position="71"/>
        <end position="91"/>
    </location>
</feature>
<feature type="topological domain" description="Extracellular" evidence="1">
    <location>
        <begin position="92"/>
        <end position="111"/>
    </location>
</feature>
<feature type="transmembrane region" description="Helical; Name=3" evidence="1">
    <location>
        <begin position="112"/>
        <end position="132"/>
    </location>
</feature>
<feature type="topological domain" description="Cytoplasmic" evidence="1">
    <location>
        <begin position="133"/>
        <end position="151"/>
    </location>
</feature>
<feature type="transmembrane region" description="Helical; Name=4" evidence="1">
    <location>
        <begin position="152"/>
        <end position="172"/>
    </location>
</feature>
<feature type="topological domain" description="Extracellular" evidence="1">
    <location>
        <begin position="173"/>
        <end position="191"/>
    </location>
</feature>
<feature type="transmembrane region" description="Helical; Name=5" evidence="1">
    <location>
        <begin position="192"/>
        <end position="212"/>
    </location>
</feature>
<feature type="topological domain" description="Cytoplasmic" evidence="1">
    <location>
        <begin position="213"/>
        <end position="252"/>
    </location>
</feature>
<feature type="transmembrane region" description="Helical; Name=6" evidence="1">
    <location>
        <begin position="253"/>
        <end position="273"/>
    </location>
</feature>
<feature type="topological domain" description="Extracellular" evidence="1">
    <location>
        <begin position="274"/>
        <end position="287"/>
    </location>
</feature>
<feature type="transmembrane region" description="Helical; Name=7" evidence="1">
    <location>
        <begin position="288"/>
        <end position="308"/>
    </location>
</feature>
<feature type="topological domain" description="Cytoplasmic" evidence="1">
    <location>
        <begin position="309"/>
        <end position="398"/>
    </location>
</feature>
<feature type="region of interest" description="Disordered" evidence="6">
    <location>
        <begin position="332"/>
        <end position="398"/>
    </location>
</feature>
<feature type="compositionally biased region" description="Low complexity" evidence="6">
    <location>
        <begin position="334"/>
        <end position="343"/>
    </location>
</feature>
<feature type="compositionally biased region" description="Basic and acidic residues" evidence="6">
    <location>
        <begin position="359"/>
        <end position="373"/>
    </location>
</feature>
<feature type="modified residue" description="Phosphoserine" evidence="2">
    <location>
        <position position="337"/>
    </location>
</feature>
<feature type="modified residue" description="Phosphoserine" evidence="3">
    <location>
        <position position="381"/>
    </location>
</feature>
<feature type="lipid moiety-binding region" description="S-palmitoyl cysteine" evidence="1">
    <location>
        <position position="323"/>
    </location>
</feature>
<feature type="glycosylation site" description="N-linked (GlcNAc...) asparagine" evidence="4">
    <location>
        <position position="20"/>
    </location>
</feature>
<accession>Q684M3</accession>
<protein>
    <recommendedName>
        <fullName>Sphingosine 1-phosphate receptor 5</fullName>
        <shortName>S1P receptor 5</shortName>
        <shortName>S1P5</shortName>
    </recommendedName>
    <alternativeName>
        <fullName>Endothelial differentiation G-protein-coupled receptor 8</fullName>
    </alternativeName>
    <alternativeName>
        <fullName>Sphingosine 1-phosphate receptor Edg-8</fullName>
        <shortName>S1P receptor Edg-8</shortName>
    </alternativeName>
</protein>
<evidence type="ECO:0000250" key="1"/>
<evidence type="ECO:0000250" key="2">
    <source>
        <dbReference type="UniProtKB" id="Q91X56"/>
    </source>
</evidence>
<evidence type="ECO:0000250" key="3">
    <source>
        <dbReference type="UniProtKB" id="Q9JKM5"/>
    </source>
</evidence>
<evidence type="ECO:0000255" key="4"/>
<evidence type="ECO:0000255" key="5">
    <source>
        <dbReference type="PROSITE-ProRule" id="PRU00521"/>
    </source>
</evidence>
<evidence type="ECO:0000256" key="6">
    <source>
        <dbReference type="SAM" id="MobiDB-lite"/>
    </source>
</evidence>
<sequence length="398" mass="41861">MEPGLLRPAPVSEVIVLHYNYTGKLRGARYQPGAGLRADAVVCLAVCALIVLENLAVLVVLGRHPRFHAPMFLLLGSLTLSDLLAGAAYAANILLSGPLTLRLSPALWFAREGGVFVALAASVLSLLAIALERLLTMERRGPAPAARRGRTLALAAGAWGVSLLLGLLPALGWNCLGRLEACSTVLPLYAKAYVLFCVLAFVGILAAICGLYARIYCQVRAKAQRLRARPGAGEGTSARARGTPRSLALLRTLSVVLVAFVACWGPLFLLLLLDVACPARACPVLLQADPFLGLAMANSLLNPIIYTFTNRDLRHALLRLICCGRRPCWGGSGTSRSPGSTLGASGGLHRWLPPGMDRSSSRSERSSPQRDGLDTSGSTGSPAAPTAAQTLVPPPAAD</sequence>
<organism>
    <name type="scientific">Sus scrofa</name>
    <name type="common">Pig</name>
    <dbReference type="NCBI Taxonomy" id="9823"/>
    <lineage>
        <taxon>Eukaryota</taxon>
        <taxon>Metazoa</taxon>
        <taxon>Chordata</taxon>
        <taxon>Craniata</taxon>
        <taxon>Vertebrata</taxon>
        <taxon>Euteleostomi</taxon>
        <taxon>Mammalia</taxon>
        <taxon>Eutheria</taxon>
        <taxon>Laurasiatheria</taxon>
        <taxon>Artiodactyla</taxon>
        <taxon>Suina</taxon>
        <taxon>Suidae</taxon>
        <taxon>Sus</taxon>
    </lineage>
</organism>
<reference key="1">
    <citation type="submission" date="2004-03" db="EMBL/GenBank/DDBJ databases">
        <authorList>
            <person name="Leeb T."/>
        </authorList>
    </citation>
    <scope>NUCLEOTIDE SEQUENCE [GENOMIC DNA]</scope>
</reference>
<name>S1PR5_PIG</name>